<keyword id="KW-0186">Copper</keyword>
<keyword id="KW-0963">Cytoplasm</keyword>
<keyword id="KW-0238">DNA-binding</keyword>
<keyword id="KW-0614">Plasmid</keyword>
<keyword id="KW-1185">Reference proteome</keyword>
<keyword id="KW-0804">Transcription</keyword>
<keyword id="KW-0805">Transcription regulation</keyword>
<geneLocation type="plasmid">
    <name>pSymA</name>
    <name>megaplasmid 1</name>
</geneLocation>
<gene>
    <name type="primary">hmrR1</name>
    <name type="synonym">hmrR</name>
    <name type="ordered locus">RA0549</name>
    <name type="ORF">SMa1014</name>
</gene>
<reference key="1">
    <citation type="journal article" date="2001" name="Proc. Natl. Acad. Sci. U.S.A.">
        <title>Nucleotide sequence and predicted functions of the entire Sinorhizobium meliloti pSymA megaplasmid.</title>
        <authorList>
            <person name="Barnett M.J."/>
            <person name="Fisher R.F."/>
            <person name="Jones T."/>
            <person name="Komp C."/>
            <person name="Abola A.P."/>
            <person name="Barloy-Hubler F."/>
            <person name="Bowser L."/>
            <person name="Capela D."/>
            <person name="Galibert F."/>
            <person name="Gouzy J."/>
            <person name="Gurjal M."/>
            <person name="Hong A."/>
            <person name="Huizar L."/>
            <person name="Hyman R.W."/>
            <person name="Kahn D."/>
            <person name="Kahn M.L."/>
            <person name="Kalman S."/>
            <person name="Keating D.H."/>
            <person name="Palm C."/>
            <person name="Peck M.C."/>
            <person name="Surzycki R."/>
            <person name="Wells D.H."/>
            <person name="Yeh K.-C."/>
            <person name="Davis R.W."/>
            <person name="Federspiel N.A."/>
            <person name="Long S.R."/>
        </authorList>
    </citation>
    <scope>NUCLEOTIDE SEQUENCE [LARGE SCALE GENOMIC DNA]</scope>
    <source>
        <strain>1021</strain>
    </source>
</reference>
<reference key="2">
    <citation type="journal article" date="2001" name="Science">
        <title>The composite genome of the legume symbiont Sinorhizobium meliloti.</title>
        <authorList>
            <person name="Galibert F."/>
            <person name="Finan T.M."/>
            <person name="Long S.R."/>
            <person name="Puehler A."/>
            <person name="Abola P."/>
            <person name="Ampe F."/>
            <person name="Barloy-Hubler F."/>
            <person name="Barnett M.J."/>
            <person name="Becker A."/>
            <person name="Boistard P."/>
            <person name="Bothe G."/>
            <person name="Boutry M."/>
            <person name="Bowser L."/>
            <person name="Buhrmester J."/>
            <person name="Cadieu E."/>
            <person name="Capela D."/>
            <person name="Chain P."/>
            <person name="Cowie A."/>
            <person name="Davis R.W."/>
            <person name="Dreano S."/>
            <person name="Federspiel N.A."/>
            <person name="Fisher R.F."/>
            <person name="Gloux S."/>
            <person name="Godrie T."/>
            <person name="Goffeau A."/>
            <person name="Golding B."/>
            <person name="Gouzy J."/>
            <person name="Gurjal M."/>
            <person name="Hernandez-Lucas I."/>
            <person name="Hong A."/>
            <person name="Huizar L."/>
            <person name="Hyman R.W."/>
            <person name="Jones T."/>
            <person name="Kahn D."/>
            <person name="Kahn M.L."/>
            <person name="Kalman S."/>
            <person name="Keating D.H."/>
            <person name="Kiss E."/>
            <person name="Komp C."/>
            <person name="Lelaure V."/>
            <person name="Masuy D."/>
            <person name="Palm C."/>
            <person name="Peck M.C."/>
            <person name="Pohl T.M."/>
            <person name="Portetelle D."/>
            <person name="Purnelle B."/>
            <person name="Ramsperger U."/>
            <person name="Surzycki R."/>
            <person name="Thebault P."/>
            <person name="Vandenbol M."/>
            <person name="Vorhoelter F.J."/>
            <person name="Weidner S."/>
            <person name="Wells D.H."/>
            <person name="Wong K."/>
            <person name="Yeh K.-C."/>
            <person name="Batut J."/>
        </authorList>
    </citation>
    <scope>NUCLEOTIDE SEQUENCE [LARGE SCALE GENOMIC DNA]</scope>
    <source>
        <strain>1021</strain>
    </source>
</reference>
<proteinExistence type="inferred from homology"/>
<feature type="chain" id="PRO_0000098124" description="Heavy metal-dependent transcription regulator 1">
    <location>
        <begin position="1"/>
        <end position="147"/>
    </location>
</feature>
<feature type="domain" description="HTH merR-type" evidence="2">
    <location>
        <begin position="1"/>
        <end position="70"/>
    </location>
</feature>
<feature type="DNA-binding region" description="H-T-H motif" evidence="2">
    <location>
        <begin position="3"/>
        <end position="22"/>
    </location>
</feature>
<accession>P58378</accession>
<evidence type="ECO:0000250" key="1"/>
<evidence type="ECO:0000255" key="2">
    <source>
        <dbReference type="PROSITE-ProRule" id="PRU00254"/>
    </source>
</evidence>
<evidence type="ECO:0000305" key="3"/>
<dbReference type="EMBL" id="AE006469">
    <property type="protein sequence ID" value="AAK65207.1"/>
    <property type="status" value="ALT_SEQ"/>
    <property type="molecule type" value="Genomic_DNA"/>
</dbReference>
<dbReference type="PIR" id="E95330">
    <property type="entry name" value="E95330"/>
</dbReference>
<dbReference type="RefSeq" id="NP_435795.1">
    <property type="nucleotide sequence ID" value="NC_003037.1"/>
</dbReference>
<dbReference type="SMR" id="P58378"/>
<dbReference type="EnsemblBacteria" id="AAK65207">
    <property type="protein sequence ID" value="AAK65207"/>
    <property type="gene ID" value="SMa1014"/>
</dbReference>
<dbReference type="KEGG" id="sme:SMa1014"/>
<dbReference type="PATRIC" id="fig|266834.11.peg.565"/>
<dbReference type="HOGENOM" id="CLU_060077_2_0_5"/>
<dbReference type="OrthoDB" id="9802944at2"/>
<dbReference type="Proteomes" id="UP000001976">
    <property type="component" value="Plasmid pSymA"/>
</dbReference>
<dbReference type="GO" id="GO:0005737">
    <property type="term" value="C:cytoplasm"/>
    <property type="evidence" value="ECO:0007669"/>
    <property type="project" value="UniProtKB-SubCell"/>
</dbReference>
<dbReference type="GO" id="GO:0005507">
    <property type="term" value="F:copper ion binding"/>
    <property type="evidence" value="ECO:0007669"/>
    <property type="project" value="InterPro"/>
</dbReference>
<dbReference type="GO" id="GO:0003677">
    <property type="term" value="F:DNA binding"/>
    <property type="evidence" value="ECO:0007669"/>
    <property type="project" value="UniProtKB-KW"/>
</dbReference>
<dbReference type="GO" id="GO:0003700">
    <property type="term" value="F:DNA-binding transcription factor activity"/>
    <property type="evidence" value="ECO:0007669"/>
    <property type="project" value="InterPro"/>
</dbReference>
<dbReference type="GO" id="GO:0045893">
    <property type="term" value="P:positive regulation of DNA-templated transcription"/>
    <property type="evidence" value="ECO:0007669"/>
    <property type="project" value="InterPro"/>
</dbReference>
<dbReference type="CDD" id="cd01108">
    <property type="entry name" value="HTH_CueR"/>
    <property type="match status" value="1"/>
</dbReference>
<dbReference type="Gene3D" id="1.10.1660.10">
    <property type="match status" value="1"/>
</dbReference>
<dbReference type="InterPro" id="IPR011789">
    <property type="entry name" value="CueR"/>
</dbReference>
<dbReference type="InterPro" id="IPR009061">
    <property type="entry name" value="DNA-bd_dom_put_sf"/>
</dbReference>
<dbReference type="InterPro" id="IPR000551">
    <property type="entry name" value="MerR-type_HTH_dom"/>
</dbReference>
<dbReference type="InterPro" id="IPR047057">
    <property type="entry name" value="MerR_fam"/>
</dbReference>
<dbReference type="InterPro" id="IPR015358">
    <property type="entry name" value="Tscrpt_reg_MerR_DNA-bd"/>
</dbReference>
<dbReference type="NCBIfam" id="TIGR02044">
    <property type="entry name" value="CueR"/>
    <property type="match status" value="1"/>
</dbReference>
<dbReference type="PANTHER" id="PTHR30204:SF94">
    <property type="entry name" value="HEAVY METAL-DEPENDENT TRANSCRIPTIONAL REGULATOR HI_0293-RELATED"/>
    <property type="match status" value="1"/>
</dbReference>
<dbReference type="PANTHER" id="PTHR30204">
    <property type="entry name" value="REDOX-CYCLING DRUG-SENSING TRANSCRIPTIONAL ACTIVATOR SOXR"/>
    <property type="match status" value="1"/>
</dbReference>
<dbReference type="Pfam" id="PF00376">
    <property type="entry name" value="MerR"/>
    <property type="match status" value="1"/>
</dbReference>
<dbReference type="Pfam" id="PF09278">
    <property type="entry name" value="MerR-DNA-bind"/>
    <property type="match status" value="1"/>
</dbReference>
<dbReference type="PRINTS" id="PR00040">
    <property type="entry name" value="HTHMERR"/>
</dbReference>
<dbReference type="SMART" id="SM00422">
    <property type="entry name" value="HTH_MERR"/>
    <property type="match status" value="1"/>
</dbReference>
<dbReference type="SUPFAM" id="SSF46955">
    <property type="entry name" value="Putative DNA-binding domain"/>
    <property type="match status" value="1"/>
</dbReference>
<dbReference type="PROSITE" id="PS50937">
    <property type="entry name" value="HTH_MERR_2"/>
    <property type="match status" value="1"/>
</dbReference>
<organism>
    <name type="scientific">Rhizobium meliloti (strain 1021)</name>
    <name type="common">Ensifer meliloti</name>
    <name type="synonym">Sinorhizobium meliloti</name>
    <dbReference type="NCBI Taxonomy" id="266834"/>
    <lineage>
        <taxon>Bacteria</taxon>
        <taxon>Pseudomonadati</taxon>
        <taxon>Pseudomonadota</taxon>
        <taxon>Alphaproteobacteria</taxon>
        <taxon>Hyphomicrobiales</taxon>
        <taxon>Rhizobiaceae</taxon>
        <taxon>Sinorhizobium/Ensifer group</taxon>
        <taxon>Sinorhizobium</taxon>
    </lineage>
</organism>
<protein>
    <recommendedName>
        <fullName>Heavy metal-dependent transcription regulator 1</fullName>
    </recommendedName>
</protein>
<sequence length="147" mass="16415">MNIGQASKVVSGVSSKMIRYYEQIGLIRPALRTASSYRVYGDNDIHTLQFVRRARDLGFSVEQIKDLLALWRDRSRNSANVKAVALEHIAELERKIAAIEEMTTTLKHLASHCHGDDRPECPIIEEIANAADGKKPRANARFGLSAL</sequence>
<comment type="function">
    <text evidence="1">Transcriptional regulator involved in acid tolerance. Binds copper (By similarity).</text>
</comment>
<comment type="subcellular location">
    <subcellularLocation>
        <location evidence="3">Cytoplasm</location>
    </subcellularLocation>
</comment>
<comment type="domain">
    <text evidence="1">It contains a N-terminal DNA binding region and a C-terminal metal binding region.</text>
</comment>
<comment type="caution">
    <text evidence="3">We have changed a potential AGG for Arg-1 as ATG for Met-1.</text>
</comment>
<name>HMRR1_RHIME</name>